<feature type="transit peptide" description="Mitochondrion">
    <location>
        <begin position="1"/>
        <end status="unknown"/>
    </location>
</feature>
<feature type="chain" id="PRO_0000036210" description="Protein mmf1, mitochondrial">
    <location>
        <begin status="unknown"/>
        <end position="162"/>
    </location>
</feature>
<proteinExistence type="inferred from homology"/>
<accession>O43003</accession>
<keyword id="KW-0963">Cytoplasm</keyword>
<keyword id="KW-0496">Mitochondrion</keyword>
<keyword id="KW-1185">Reference proteome</keyword>
<keyword id="KW-0809">Transit peptide</keyword>
<comment type="function">
    <text evidence="1">Plays a role in the maintenance of mitochondrial DNA.</text>
</comment>
<comment type="subcellular location">
    <subcellularLocation>
        <location evidence="1">Mitochondrion</location>
    </subcellularLocation>
    <subcellularLocation>
        <location evidence="1">Cytoplasm</location>
    </subcellularLocation>
</comment>
<comment type="similarity">
    <text evidence="2">Belongs to the RutC family.</text>
</comment>
<reference key="1">
    <citation type="journal article" date="2002" name="Nature">
        <title>The genome sequence of Schizosaccharomyces pombe.</title>
        <authorList>
            <person name="Wood V."/>
            <person name="Gwilliam R."/>
            <person name="Rajandream M.A."/>
            <person name="Lyne M.H."/>
            <person name="Lyne R."/>
            <person name="Stewart A."/>
            <person name="Sgouros J.G."/>
            <person name="Peat N."/>
            <person name="Hayles J."/>
            <person name="Baker S.G."/>
            <person name="Basham D."/>
            <person name="Bowman S."/>
            <person name="Brooks K."/>
            <person name="Brown D."/>
            <person name="Brown S."/>
            <person name="Chillingworth T."/>
            <person name="Churcher C.M."/>
            <person name="Collins M."/>
            <person name="Connor R."/>
            <person name="Cronin A."/>
            <person name="Davis P."/>
            <person name="Feltwell T."/>
            <person name="Fraser A."/>
            <person name="Gentles S."/>
            <person name="Goble A."/>
            <person name="Hamlin N."/>
            <person name="Harris D.E."/>
            <person name="Hidalgo J."/>
            <person name="Hodgson G."/>
            <person name="Holroyd S."/>
            <person name="Hornsby T."/>
            <person name="Howarth S."/>
            <person name="Huckle E.J."/>
            <person name="Hunt S."/>
            <person name="Jagels K."/>
            <person name="James K.D."/>
            <person name="Jones L."/>
            <person name="Jones M."/>
            <person name="Leather S."/>
            <person name="McDonald S."/>
            <person name="McLean J."/>
            <person name="Mooney P."/>
            <person name="Moule S."/>
            <person name="Mungall K.L."/>
            <person name="Murphy L.D."/>
            <person name="Niblett D."/>
            <person name="Odell C."/>
            <person name="Oliver K."/>
            <person name="O'Neil S."/>
            <person name="Pearson D."/>
            <person name="Quail M.A."/>
            <person name="Rabbinowitsch E."/>
            <person name="Rutherford K.M."/>
            <person name="Rutter S."/>
            <person name="Saunders D."/>
            <person name="Seeger K."/>
            <person name="Sharp S."/>
            <person name="Skelton J."/>
            <person name="Simmonds M.N."/>
            <person name="Squares R."/>
            <person name="Squares S."/>
            <person name="Stevens K."/>
            <person name="Taylor K."/>
            <person name="Taylor R.G."/>
            <person name="Tivey A."/>
            <person name="Walsh S.V."/>
            <person name="Warren T."/>
            <person name="Whitehead S."/>
            <person name="Woodward J.R."/>
            <person name="Volckaert G."/>
            <person name="Aert R."/>
            <person name="Robben J."/>
            <person name="Grymonprez B."/>
            <person name="Weltjens I."/>
            <person name="Vanstreels E."/>
            <person name="Rieger M."/>
            <person name="Schaefer M."/>
            <person name="Mueller-Auer S."/>
            <person name="Gabel C."/>
            <person name="Fuchs M."/>
            <person name="Duesterhoeft A."/>
            <person name="Fritzc C."/>
            <person name="Holzer E."/>
            <person name="Moestl D."/>
            <person name="Hilbert H."/>
            <person name="Borzym K."/>
            <person name="Langer I."/>
            <person name="Beck A."/>
            <person name="Lehrach H."/>
            <person name="Reinhardt R."/>
            <person name="Pohl T.M."/>
            <person name="Eger P."/>
            <person name="Zimmermann W."/>
            <person name="Wedler H."/>
            <person name="Wambutt R."/>
            <person name="Purnelle B."/>
            <person name="Goffeau A."/>
            <person name="Cadieu E."/>
            <person name="Dreano S."/>
            <person name="Gloux S."/>
            <person name="Lelaure V."/>
            <person name="Mottier S."/>
            <person name="Galibert F."/>
            <person name="Aves S.J."/>
            <person name="Xiang Z."/>
            <person name="Hunt C."/>
            <person name="Moore K."/>
            <person name="Hurst S.M."/>
            <person name="Lucas M."/>
            <person name="Rochet M."/>
            <person name="Gaillardin C."/>
            <person name="Tallada V.A."/>
            <person name="Garzon A."/>
            <person name="Thode G."/>
            <person name="Daga R.R."/>
            <person name="Cruzado L."/>
            <person name="Jimenez J."/>
            <person name="Sanchez M."/>
            <person name="del Rey F."/>
            <person name="Benito J."/>
            <person name="Dominguez A."/>
            <person name="Revuelta J.L."/>
            <person name="Moreno S."/>
            <person name="Armstrong J."/>
            <person name="Forsburg S.L."/>
            <person name="Cerutti L."/>
            <person name="Lowe T."/>
            <person name="McCombie W.R."/>
            <person name="Paulsen I."/>
            <person name="Potashkin J."/>
            <person name="Shpakovski G.V."/>
            <person name="Ussery D."/>
            <person name="Barrell B.G."/>
            <person name="Nurse P."/>
        </authorList>
    </citation>
    <scope>NUCLEOTIDE SEQUENCE [LARGE SCALE GENOMIC DNA]</scope>
    <source>
        <strain>972 / ATCC 24843</strain>
    </source>
</reference>
<reference key="2">
    <citation type="journal article" date="2002" name="Yeast">
        <title>Schizosaccharomyces pombe Pmf1p is structurally and functionally related to Mmf1p of Saccharomyces cerevisiae.</title>
        <authorList>
            <person name="Marchini A."/>
            <person name="Accardi R."/>
            <person name="Malanchi I."/>
            <person name="Schyr E."/>
            <person name="Oxelmark E."/>
            <person name="De Pinto V."/>
            <person name="Jauniaux J.-C."/>
            <person name="Maundrell K."/>
            <person name="Tommasino M."/>
        </authorList>
    </citation>
    <scope>FUNCTION</scope>
    <scope>SUBCELLULAR LOCATION</scope>
</reference>
<name>MMF1_SCHPO</name>
<gene>
    <name type="primary">mmf1</name>
    <name type="synonym">pmf1</name>
    <name type="ORF">SPBC2G2.04c</name>
</gene>
<evidence type="ECO:0000269" key="1">
    <source>
    </source>
</evidence>
<evidence type="ECO:0000305" key="2"/>
<sequence>MLRALGSRLLVASRPAAYRSFQQSLRPVPRFFIHKMSTKTPINSPKLSSAGPYNQAIKANGVIYCSGQIPVANGKVIEGTVGDQTRQCLLNLQEVLTEAGSSLNKIVKVNIFLADMDDFAAVNKVYTEVLPDPKPARSCVAVKTVPLSTQGVKIEIECIALE</sequence>
<organism>
    <name type="scientific">Schizosaccharomyces pombe (strain 972 / ATCC 24843)</name>
    <name type="common">Fission yeast</name>
    <dbReference type="NCBI Taxonomy" id="284812"/>
    <lineage>
        <taxon>Eukaryota</taxon>
        <taxon>Fungi</taxon>
        <taxon>Dikarya</taxon>
        <taxon>Ascomycota</taxon>
        <taxon>Taphrinomycotina</taxon>
        <taxon>Schizosaccharomycetes</taxon>
        <taxon>Schizosaccharomycetales</taxon>
        <taxon>Schizosaccharomycetaceae</taxon>
        <taxon>Schizosaccharomyces</taxon>
    </lineage>
</organism>
<dbReference type="EMBL" id="CU329671">
    <property type="protein sequence ID" value="CAA17884.1"/>
    <property type="molecule type" value="Genomic_DNA"/>
</dbReference>
<dbReference type="PIR" id="T40143">
    <property type="entry name" value="T40143"/>
</dbReference>
<dbReference type="RefSeq" id="NP_596433.1">
    <property type="nucleotide sequence ID" value="NM_001022352.2"/>
</dbReference>
<dbReference type="SMR" id="O43003"/>
<dbReference type="BioGRID" id="276989">
    <property type="interactions" value="3"/>
</dbReference>
<dbReference type="FunCoup" id="O43003">
    <property type="interactions" value="258"/>
</dbReference>
<dbReference type="STRING" id="284812.O43003"/>
<dbReference type="iPTMnet" id="O43003"/>
<dbReference type="PaxDb" id="4896-SPBC2G2.04c.1"/>
<dbReference type="EnsemblFungi" id="SPBC2G2.04c.1">
    <property type="protein sequence ID" value="SPBC2G2.04c.1:pep"/>
    <property type="gene ID" value="SPBC2G2.04c"/>
</dbReference>
<dbReference type="GeneID" id="2540461"/>
<dbReference type="KEGG" id="spo:2540461"/>
<dbReference type="PomBase" id="SPBC2G2.04c">
    <property type="gene designation" value="mmf1"/>
</dbReference>
<dbReference type="VEuPathDB" id="FungiDB:SPBC2G2.04c"/>
<dbReference type="eggNOG" id="KOG2317">
    <property type="taxonomic scope" value="Eukaryota"/>
</dbReference>
<dbReference type="HOGENOM" id="CLU_100715_7_2_1"/>
<dbReference type="InParanoid" id="O43003"/>
<dbReference type="OMA" id="PAKFSHG"/>
<dbReference type="PhylomeDB" id="O43003"/>
<dbReference type="Reactome" id="R-SPO-8849175">
    <property type="pathway name" value="Threonine catabolism"/>
</dbReference>
<dbReference type="PRO" id="PR:O43003"/>
<dbReference type="Proteomes" id="UP000002485">
    <property type="component" value="Chromosome II"/>
</dbReference>
<dbReference type="GO" id="GO:0005829">
    <property type="term" value="C:cytosol"/>
    <property type="evidence" value="ECO:0000318"/>
    <property type="project" value="GO_Central"/>
</dbReference>
<dbReference type="GO" id="GO:0005759">
    <property type="term" value="C:mitochondrial matrix"/>
    <property type="evidence" value="ECO:0000266"/>
    <property type="project" value="PomBase"/>
</dbReference>
<dbReference type="GO" id="GO:0005739">
    <property type="term" value="C:mitochondrion"/>
    <property type="evidence" value="ECO:0000314"/>
    <property type="project" value="PomBase"/>
</dbReference>
<dbReference type="GO" id="GO:0019239">
    <property type="term" value="F:deaminase activity"/>
    <property type="evidence" value="ECO:0000318"/>
    <property type="project" value="GO_Central"/>
</dbReference>
<dbReference type="CDD" id="cd00448">
    <property type="entry name" value="YjgF_YER057c_UK114_family"/>
    <property type="match status" value="1"/>
</dbReference>
<dbReference type="FunFam" id="3.30.1330.40:FF:000001">
    <property type="entry name" value="L-PSP family endoribonuclease"/>
    <property type="match status" value="1"/>
</dbReference>
<dbReference type="Gene3D" id="3.30.1330.40">
    <property type="entry name" value="RutC-like"/>
    <property type="match status" value="1"/>
</dbReference>
<dbReference type="InterPro" id="IPR006056">
    <property type="entry name" value="RidA"/>
</dbReference>
<dbReference type="InterPro" id="IPR019897">
    <property type="entry name" value="RidA_CS"/>
</dbReference>
<dbReference type="InterPro" id="IPR035959">
    <property type="entry name" value="RutC-like_sf"/>
</dbReference>
<dbReference type="InterPro" id="IPR006175">
    <property type="entry name" value="YjgF/YER057c/UK114"/>
</dbReference>
<dbReference type="NCBIfam" id="TIGR00004">
    <property type="entry name" value="Rid family detoxifying hydrolase"/>
    <property type="match status" value="1"/>
</dbReference>
<dbReference type="PANTHER" id="PTHR11803">
    <property type="entry name" value="2-IMINOBUTANOATE/2-IMINOPROPANOATE DEAMINASE RIDA"/>
    <property type="match status" value="1"/>
</dbReference>
<dbReference type="PANTHER" id="PTHR11803:SF58">
    <property type="entry name" value="PROTEIN HMF1-RELATED"/>
    <property type="match status" value="1"/>
</dbReference>
<dbReference type="Pfam" id="PF01042">
    <property type="entry name" value="Ribonuc_L-PSP"/>
    <property type="match status" value="1"/>
</dbReference>
<dbReference type="SUPFAM" id="SSF55298">
    <property type="entry name" value="YjgF-like"/>
    <property type="match status" value="1"/>
</dbReference>
<dbReference type="PROSITE" id="PS01094">
    <property type="entry name" value="UPF0076"/>
    <property type="match status" value="1"/>
</dbReference>
<protein>
    <recommendedName>
        <fullName>Protein mmf1, mitochondrial</fullName>
    </recommendedName>
    <alternativeName>
        <fullName>Isoleucine biosynthesis and maintenance of intact mitochondria 1</fullName>
    </alternativeName>
    <alternativeName>
        <fullName>Maintenance of mitochondrial function 1</fullName>
    </alternativeName>
</protein>